<keyword id="KW-1185">Reference proteome</keyword>
<reference key="1">
    <citation type="journal article" date="1995" name="Science">
        <title>Whole-genome random sequencing and assembly of Haemophilus influenzae Rd.</title>
        <authorList>
            <person name="Fleischmann R.D."/>
            <person name="Adams M.D."/>
            <person name="White O."/>
            <person name="Clayton R.A."/>
            <person name="Kirkness E.F."/>
            <person name="Kerlavage A.R."/>
            <person name="Bult C.J."/>
            <person name="Tomb J.-F."/>
            <person name="Dougherty B.A."/>
            <person name="Merrick J.M."/>
            <person name="McKenney K."/>
            <person name="Sutton G.G."/>
            <person name="FitzHugh W."/>
            <person name="Fields C.A."/>
            <person name="Gocayne J.D."/>
            <person name="Scott J.D."/>
            <person name="Shirley R."/>
            <person name="Liu L.-I."/>
            <person name="Glodek A."/>
            <person name="Kelley J.M."/>
            <person name="Weidman J.F."/>
            <person name="Phillips C.A."/>
            <person name="Spriggs T."/>
            <person name="Hedblom E."/>
            <person name="Cotton M.D."/>
            <person name="Utterback T.R."/>
            <person name="Hanna M.C."/>
            <person name="Nguyen D.T."/>
            <person name="Saudek D.M."/>
            <person name="Brandon R.C."/>
            <person name="Fine L.D."/>
            <person name="Fritchman J.L."/>
            <person name="Fuhrmann J.L."/>
            <person name="Geoghagen N.S.M."/>
            <person name="Gnehm C.L."/>
            <person name="McDonald L.A."/>
            <person name="Small K.V."/>
            <person name="Fraser C.M."/>
            <person name="Smith H.O."/>
            <person name="Venter J.C."/>
        </authorList>
    </citation>
    <scope>NUCLEOTIDE SEQUENCE [LARGE SCALE GENOMIC DNA]</scope>
    <source>
        <strain>ATCC 51907 / DSM 11121 / KW20 / Rd</strain>
    </source>
</reference>
<evidence type="ECO:0000305" key="1"/>
<comment type="similarity">
    <text evidence="1">To E.coli YbfG.</text>
</comment>
<proteinExistence type="predicted"/>
<feature type="chain" id="PRO_0000168692" description="Uncharacterized protein HI_0374">
    <location>
        <begin position="1"/>
        <end position="228"/>
    </location>
</feature>
<name>Y374_HAEIN</name>
<gene>
    <name type="ordered locus">HI_0374</name>
</gene>
<organism>
    <name type="scientific">Haemophilus influenzae (strain ATCC 51907 / DSM 11121 / KW20 / Rd)</name>
    <dbReference type="NCBI Taxonomy" id="71421"/>
    <lineage>
        <taxon>Bacteria</taxon>
        <taxon>Pseudomonadati</taxon>
        <taxon>Pseudomonadota</taxon>
        <taxon>Gammaproteobacteria</taxon>
        <taxon>Pasteurellales</taxon>
        <taxon>Pasteurellaceae</taxon>
        <taxon>Haemophilus</taxon>
    </lineage>
</organism>
<protein>
    <recommendedName>
        <fullName>Uncharacterized protein HI_0374</fullName>
    </recommendedName>
</protein>
<sequence length="228" mass="26195">MQTLEQLTSPEHSAWITLSQWIDNARNHCEVIKKDQSSAERELFTMQMPTSSPMGAVIYETGGILIHYGWLRILGSGSFKLPRGLMDWNFSKSFSESGEKPKYLLVADDVIGGYFALNGGSLGNNIGKIYYYSSKDLTWHNLNFTYTEFLAWVLNGDVEAFYQGLFWKNWQDDVKQLDGNQVFVFTPDLNQDRKIAIDERQKQEVNIETHYQANFAEKNKFDLAYSVA</sequence>
<dbReference type="EMBL" id="L42023">
    <property type="protein sequence ID" value="AAC22036.1"/>
    <property type="molecule type" value="Genomic_DNA"/>
</dbReference>
<dbReference type="PIR" id="C64150">
    <property type="entry name" value="C64150"/>
</dbReference>
<dbReference type="RefSeq" id="NP_438535.1">
    <property type="nucleotide sequence ID" value="NC_000907.1"/>
</dbReference>
<dbReference type="STRING" id="71421.HI_0374"/>
<dbReference type="EnsemblBacteria" id="AAC22036">
    <property type="protein sequence ID" value="AAC22036"/>
    <property type="gene ID" value="HI_0374"/>
</dbReference>
<dbReference type="KEGG" id="hin:HI_0374"/>
<dbReference type="PATRIC" id="fig|71421.8.peg.392"/>
<dbReference type="eggNOG" id="ENOG502ZBPN">
    <property type="taxonomic scope" value="Bacteria"/>
</dbReference>
<dbReference type="HOGENOM" id="CLU_071055_0_0_6"/>
<dbReference type="OrthoDB" id="1550811at2"/>
<dbReference type="PhylomeDB" id="P44670"/>
<dbReference type="BioCyc" id="HINF71421:G1GJ1-387-MONOMER"/>
<dbReference type="Proteomes" id="UP000000579">
    <property type="component" value="Chromosome"/>
</dbReference>
<dbReference type="InterPro" id="IPR021239">
    <property type="entry name" value="DUF2625"/>
</dbReference>
<dbReference type="NCBIfam" id="NF008497">
    <property type="entry name" value="PRK11408.1-4"/>
    <property type="match status" value="1"/>
</dbReference>
<dbReference type="Pfam" id="PF10946">
    <property type="entry name" value="DUF2625"/>
    <property type="match status" value="1"/>
</dbReference>
<accession>P44670</accession>